<proteinExistence type="evidence at transcript level"/>
<gene>
    <name evidence="2" type="primary">samhd1</name>
</gene>
<accession>Q502K2</accession>
<sequence length="622" mass="71668">MENRIKRPRVDGECVKSINNGEFDRWDVEDTVAYLRGEGLQEWAQIFKDNGITGAGLLCLTEAHLEKMGVSPLGARLHILHCLQKLSQISTEPMKVFNDPIHGHIELHPLLLHFIDTPQFQRLRHIKQLGGTYLVFPGASHNRFEHSIGVGYLAGCLVKALNERQPELFITKQDILCVQIAGLCHDLGHGPFSHMFDGMFIPKARPADKWKHEIASVQMFDHLVEVNGLEAVMLHHGMRLPEDLIFIKEQIAGPLESAVLDQSQWPYKGRPVEKSFLYEVVANKRNGIDVDKWDYFARDCYHLGIQNNFDYQRFLRFARVCEVKGRKHICTRDKEVGNLYDMFHTRNCLHRRAYQHKVGNIIETMITEAFLKADPHIQIQGSSGRIFTISSAIEDMEAYSKLTDHIFEQILYSSGPELSEARAILQNIICRRLYKCVGQTTSETNVDVSQEKLLDWAKELARSKPTGTEGNLIAEDFVVSVIHMDYGMKEKNPINNVHFYCKNDPTKAIKIHKKQVSKLLPERFAEQLIRVYCKKTDDKSLEAAKKYFVQWCMDRNFTKPQDGDIIAPELTPLKQDWHAREDEDEEEEEKHRQNQTLPHHTPQRTGRNVKVDLFQARGETKL</sequence>
<keyword id="KW-0021">Allosteric enzyme</keyword>
<keyword id="KW-0051">Antiviral defense</keyword>
<keyword id="KW-0158">Chromosome</keyword>
<keyword id="KW-0227">DNA damage</keyword>
<keyword id="KW-0234">DNA repair</keyword>
<keyword id="KW-0235">DNA replication</keyword>
<keyword id="KW-0342">GTP-binding</keyword>
<keyword id="KW-0378">Hydrolase</keyword>
<keyword id="KW-0391">Immunity</keyword>
<keyword id="KW-0399">Innate immunity</keyword>
<keyword id="KW-0464">Manganese</keyword>
<keyword id="KW-0479">Metal-binding</keyword>
<keyword id="KW-0547">Nucleotide-binding</keyword>
<keyword id="KW-0539">Nucleus</keyword>
<keyword id="KW-1185">Reference proteome</keyword>
<keyword id="KW-0862">Zinc</keyword>
<protein>
    <recommendedName>
        <fullName evidence="6">Deoxynucleoside triphosphate triphosphohydrolase SAMHD1</fullName>
        <shortName evidence="6">dNTPase</shortName>
        <ecNumber evidence="2">3.1.5.-</ecNumber>
    </recommendedName>
</protein>
<name>SAMH1_DANRE</name>
<comment type="function">
    <text evidence="2">Protein that acts both as a host restriction factor involved in defense response to virus and as a regulator of DNA end resection at stalled replication forks. Has deoxynucleoside triphosphate (dNTPase) activity, which is required to restrict infection by viruses: dNTPase activity reduces cellular dNTP levels to levels too low for retroviral reverse transcription to occur, blocking early-stage virus replication in dendritic and other myeloid cells. Functions during S phase at stalled DNA replication forks to promote the resection of gapped or reversed forks: acts by stimulating the exonuclease activity of MRE11, activating the ATR-CHK1 pathway and allowing the forks to restart replication. Its ability to promote degradation of nascent DNA at stalled replication forks is required to prevent induction of type I interferons, thereby preventing chronic inflammation. Ability to promote DNA end resection at stalled replication forks is independent of dNTPase activity.</text>
</comment>
<comment type="catalytic activity">
    <reaction evidence="2">
        <text>a 2'-deoxyribonucleoside 5'-triphosphate + H2O = a 2'-deoxyribonucleoside + triphosphate + H(+)</text>
        <dbReference type="Rhea" id="RHEA:46148"/>
        <dbReference type="ChEBI" id="CHEBI:15377"/>
        <dbReference type="ChEBI" id="CHEBI:15378"/>
        <dbReference type="ChEBI" id="CHEBI:18036"/>
        <dbReference type="ChEBI" id="CHEBI:18274"/>
        <dbReference type="ChEBI" id="CHEBI:61560"/>
    </reaction>
    <physiologicalReaction direction="left-to-right" evidence="2">
        <dbReference type="Rhea" id="RHEA:46149"/>
    </physiologicalReaction>
</comment>
<comment type="catalytic activity">
    <reaction evidence="2">
        <text>dATP + H2O = 2'-deoxyadenosine + triphosphate + H(+)</text>
        <dbReference type="Rhea" id="RHEA:67648"/>
        <dbReference type="ChEBI" id="CHEBI:15377"/>
        <dbReference type="ChEBI" id="CHEBI:15378"/>
        <dbReference type="ChEBI" id="CHEBI:17256"/>
        <dbReference type="ChEBI" id="CHEBI:18036"/>
        <dbReference type="ChEBI" id="CHEBI:61404"/>
    </reaction>
    <physiologicalReaction direction="left-to-right" evidence="2">
        <dbReference type="Rhea" id="RHEA:67649"/>
    </physiologicalReaction>
</comment>
<comment type="catalytic activity">
    <reaction evidence="2">
        <text>dCTP + H2O = 2'-deoxycytidine + triphosphate + H(+)</text>
        <dbReference type="Rhea" id="RHEA:80083"/>
        <dbReference type="ChEBI" id="CHEBI:15377"/>
        <dbReference type="ChEBI" id="CHEBI:15378"/>
        <dbReference type="ChEBI" id="CHEBI:15698"/>
        <dbReference type="ChEBI" id="CHEBI:18036"/>
        <dbReference type="ChEBI" id="CHEBI:61481"/>
    </reaction>
    <physiologicalReaction direction="left-to-right" evidence="2">
        <dbReference type="Rhea" id="RHEA:80084"/>
    </physiologicalReaction>
</comment>
<comment type="catalytic activity">
    <reaction evidence="2">
        <text>dGTP + H2O = 2'-deoxyguanosine + triphosphate + H(+)</text>
        <dbReference type="Rhea" id="RHEA:15193"/>
        <dbReference type="ChEBI" id="CHEBI:15377"/>
        <dbReference type="ChEBI" id="CHEBI:15378"/>
        <dbReference type="ChEBI" id="CHEBI:17172"/>
        <dbReference type="ChEBI" id="CHEBI:18036"/>
        <dbReference type="ChEBI" id="CHEBI:61429"/>
    </reaction>
    <physiologicalReaction direction="left-to-right" evidence="2">
        <dbReference type="Rhea" id="RHEA:15194"/>
    </physiologicalReaction>
</comment>
<comment type="catalytic activity">
    <reaction evidence="2">
        <text>dTTP + H2O = thymidine + triphosphate + H(+)</text>
        <dbReference type="Rhea" id="RHEA:80079"/>
        <dbReference type="ChEBI" id="CHEBI:15377"/>
        <dbReference type="ChEBI" id="CHEBI:15378"/>
        <dbReference type="ChEBI" id="CHEBI:17748"/>
        <dbReference type="ChEBI" id="CHEBI:18036"/>
        <dbReference type="ChEBI" id="CHEBI:37568"/>
    </reaction>
    <physiologicalReaction direction="left-to-right" evidence="2">
        <dbReference type="Rhea" id="RHEA:80080"/>
    </physiologicalReaction>
</comment>
<comment type="cofactor">
    <cofactor evidence="2">
        <name>Zn(2+)</name>
        <dbReference type="ChEBI" id="CHEBI:29105"/>
    </cofactor>
    <text evidence="2">Binds 1 zinc ion per subunit.</text>
</comment>
<comment type="activity regulation">
    <text evidence="2">Allosterically activated and regulated via the combined actions of GTP and dNTPs (dATP, dGTP, dTTP and dCTP): Allosteric site 1 binds GTP, while allosteric site 2 binds dNTP. Allosteric activation promotes the formation of highly active homotetramers.</text>
</comment>
<comment type="subunit">
    <text evidence="1 2">Homodimer; in absence of GTP and dNTP. Homotetramer; in GTP- and dNTP-bound form (By similarity). Interacts with rbbp8/CtIP (By similarity).</text>
</comment>
<comment type="subcellular location">
    <subcellularLocation>
        <location evidence="2">Nucleus</location>
    </subcellularLocation>
    <subcellularLocation>
        <location evidence="2">Chromosome</location>
    </subcellularLocation>
    <text evidence="2">Localizes to sites of DNA double-strand breaks in response to DNA damage.</text>
</comment>
<comment type="similarity">
    <text evidence="6">Belongs to the SAMHD1 family.</text>
</comment>
<comment type="sequence caution" evidence="6">
    <conflict type="erroneous initiation">
        <sequence resource="EMBL-CDS" id="AAH95665"/>
    </conflict>
</comment>
<dbReference type="EC" id="3.1.5.-" evidence="2"/>
<dbReference type="EMBL" id="BC095665">
    <property type="protein sequence ID" value="AAH95665.1"/>
    <property type="status" value="ALT_INIT"/>
    <property type="molecule type" value="mRNA"/>
</dbReference>
<dbReference type="SMR" id="Q502K2"/>
<dbReference type="FunCoup" id="Q502K2">
    <property type="interactions" value="1368"/>
</dbReference>
<dbReference type="STRING" id="7955.ENSDARP00000096087"/>
<dbReference type="PaxDb" id="7955-ENSDARP00000096087"/>
<dbReference type="AGR" id="ZFIN:ZDB-GENE-090313-386"/>
<dbReference type="ZFIN" id="ZDB-GENE-090313-386">
    <property type="gene designation" value="samhd1"/>
</dbReference>
<dbReference type="eggNOG" id="KOG2681">
    <property type="taxonomic scope" value="Eukaryota"/>
</dbReference>
<dbReference type="InParanoid" id="Q502K2"/>
<dbReference type="PhylomeDB" id="Q502K2"/>
<dbReference type="Reactome" id="R-DRE-8956319">
    <property type="pathway name" value="Nucleotide catabolism"/>
</dbReference>
<dbReference type="PRO" id="PR:Q502K2"/>
<dbReference type="Proteomes" id="UP000000437">
    <property type="component" value="Unplaced"/>
</dbReference>
<dbReference type="GO" id="GO:0005634">
    <property type="term" value="C:nucleus"/>
    <property type="evidence" value="ECO:0000250"/>
    <property type="project" value="UniProtKB"/>
</dbReference>
<dbReference type="GO" id="GO:0035861">
    <property type="term" value="C:site of double-strand break"/>
    <property type="evidence" value="ECO:0000250"/>
    <property type="project" value="UniProtKB"/>
</dbReference>
<dbReference type="GO" id="GO:0106375">
    <property type="term" value="F:deoxynucleoside triphosphate hydrolase activity"/>
    <property type="evidence" value="ECO:0000250"/>
    <property type="project" value="UniProtKB"/>
</dbReference>
<dbReference type="GO" id="GO:0032567">
    <property type="term" value="F:dGTP binding"/>
    <property type="evidence" value="ECO:0000250"/>
    <property type="project" value="UniProtKB"/>
</dbReference>
<dbReference type="GO" id="GO:0008832">
    <property type="term" value="F:dGTPase activity"/>
    <property type="evidence" value="ECO:0000250"/>
    <property type="project" value="UniProtKB"/>
</dbReference>
<dbReference type="GO" id="GO:0005525">
    <property type="term" value="F:GTP binding"/>
    <property type="evidence" value="ECO:0007669"/>
    <property type="project" value="UniProtKB-KW"/>
</dbReference>
<dbReference type="GO" id="GO:0003676">
    <property type="term" value="F:nucleic acid binding"/>
    <property type="evidence" value="ECO:0000250"/>
    <property type="project" value="UniProtKB"/>
</dbReference>
<dbReference type="GO" id="GO:0003723">
    <property type="term" value="F:RNA binding"/>
    <property type="evidence" value="ECO:0000250"/>
    <property type="project" value="UniProtKB"/>
</dbReference>
<dbReference type="GO" id="GO:0003697">
    <property type="term" value="F:single-stranded DNA binding"/>
    <property type="evidence" value="ECO:0000250"/>
    <property type="project" value="UniProtKB"/>
</dbReference>
<dbReference type="GO" id="GO:0016793">
    <property type="term" value="F:triphosphoric monoester hydrolase activity"/>
    <property type="evidence" value="ECO:0000250"/>
    <property type="project" value="UniProtKB"/>
</dbReference>
<dbReference type="GO" id="GO:0008270">
    <property type="term" value="F:zinc ion binding"/>
    <property type="evidence" value="ECO:0000250"/>
    <property type="project" value="UniProtKB"/>
</dbReference>
<dbReference type="GO" id="GO:0046061">
    <property type="term" value="P:dATP catabolic process"/>
    <property type="evidence" value="ECO:0000250"/>
    <property type="project" value="UniProtKB"/>
</dbReference>
<dbReference type="GO" id="GO:0051607">
    <property type="term" value="P:defense response to virus"/>
    <property type="evidence" value="ECO:0000250"/>
    <property type="project" value="UniProtKB"/>
</dbReference>
<dbReference type="GO" id="GO:0009264">
    <property type="term" value="P:deoxyribonucleotide catabolic process"/>
    <property type="evidence" value="ECO:0000250"/>
    <property type="project" value="UniProtKB"/>
</dbReference>
<dbReference type="GO" id="GO:0006203">
    <property type="term" value="P:dGTP catabolic process"/>
    <property type="evidence" value="ECO:0000250"/>
    <property type="project" value="UniProtKB"/>
</dbReference>
<dbReference type="GO" id="GO:0006974">
    <property type="term" value="P:DNA damage response"/>
    <property type="evidence" value="ECO:0000250"/>
    <property type="project" value="UniProtKB"/>
</dbReference>
<dbReference type="GO" id="GO:0110025">
    <property type="term" value="P:DNA strand resection involved in replication fork processing"/>
    <property type="evidence" value="ECO:0000250"/>
    <property type="project" value="UniProtKB"/>
</dbReference>
<dbReference type="GO" id="GO:0000724">
    <property type="term" value="P:double-strand break repair via homologous recombination"/>
    <property type="evidence" value="ECO:0000250"/>
    <property type="project" value="UniProtKB"/>
</dbReference>
<dbReference type="GO" id="GO:0045087">
    <property type="term" value="P:innate immune response"/>
    <property type="evidence" value="ECO:0007669"/>
    <property type="project" value="UniProtKB-KW"/>
</dbReference>
<dbReference type="GO" id="GO:0060339">
    <property type="term" value="P:negative regulation of type I interferon-mediated signaling pathway"/>
    <property type="evidence" value="ECO:0000250"/>
    <property type="project" value="UniProtKB"/>
</dbReference>
<dbReference type="GO" id="GO:0051289">
    <property type="term" value="P:protein homotetramerization"/>
    <property type="evidence" value="ECO:0000250"/>
    <property type="project" value="UniProtKB"/>
</dbReference>
<dbReference type="GO" id="GO:0045540">
    <property type="term" value="P:regulation of cholesterol biosynthetic process"/>
    <property type="evidence" value="ECO:0000315"/>
    <property type="project" value="ZFIN"/>
</dbReference>
<dbReference type="GO" id="GO:0045088">
    <property type="term" value="P:regulation of innate immune response"/>
    <property type="evidence" value="ECO:0000315"/>
    <property type="project" value="ZFIN"/>
</dbReference>
<dbReference type="GO" id="GO:0016446">
    <property type="term" value="P:somatic hypermutation of immunoglobulin genes"/>
    <property type="evidence" value="ECO:0000250"/>
    <property type="project" value="UniProtKB"/>
</dbReference>
<dbReference type="GO" id="GO:0036269">
    <property type="term" value="P:swimming behavior"/>
    <property type="evidence" value="ECO:0000315"/>
    <property type="project" value="ZFIN"/>
</dbReference>
<dbReference type="CDD" id="cd00077">
    <property type="entry name" value="HDc"/>
    <property type="match status" value="1"/>
</dbReference>
<dbReference type="CDD" id="cd09508">
    <property type="entry name" value="SAM_HD"/>
    <property type="match status" value="1"/>
</dbReference>
<dbReference type="FunFam" id="1.10.3210.10:FF:000015">
    <property type="entry name" value="Deoxynucleoside triphosphate triphosphohydrolase SAMHD1"/>
    <property type="match status" value="1"/>
</dbReference>
<dbReference type="FunFam" id="1.10.150.50:FF:000067">
    <property type="entry name" value="SAM and HD domain-containing deoxynucleoside triphosphate triphosphohydrolase 1"/>
    <property type="match status" value="1"/>
</dbReference>
<dbReference type="FunFam" id="3.30.70.2760:FF:000002">
    <property type="entry name" value="SAM and HD domain-containing deoxynucleoside triphosphate triphosphohydrolase 1"/>
    <property type="match status" value="1"/>
</dbReference>
<dbReference type="Gene3D" id="3.30.70.2760">
    <property type="match status" value="1"/>
</dbReference>
<dbReference type="Gene3D" id="1.10.3210.10">
    <property type="entry name" value="Hypothetical protein af1432"/>
    <property type="match status" value="1"/>
</dbReference>
<dbReference type="Gene3D" id="1.10.150.50">
    <property type="entry name" value="Transcription Factor, Ets-1"/>
    <property type="match status" value="1"/>
</dbReference>
<dbReference type="InterPro" id="IPR050135">
    <property type="entry name" value="dGTPase-like"/>
</dbReference>
<dbReference type="InterPro" id="IPR003607">
    <property type="entry name" value="HD/PDEase_dom"/>
</dbReference>
<dbReference type="InterPro" id="IPR006674">
    <property type="entry name" value="HD_domain"/>
</dbReference>
<dbReference type="InterPro" id="IPR001660">
    <property type="entry name" value="SAM"/>
</dbReference>
<dbReference type="InterPro" id="IPR013761">
    <property type="entry name" value="SAM/pointed_sf"/>
</dbReference>
<dbReference type="PANTHER" id="PTHR11373">
    <property type="entry name" value="DEOXYNUCLEOSIDE TRIPHOSPHATE TRIPHOSPHOHYDROLASE"/>
    <property type="match status" value="1"/>
</dbReference>
<dbReference type="PANTHER" id="PTHR11373:SF4">
    <property type="entry name" value="DEOXYNUCLEOSIDE TRIPHOSPHATE TRIPHOSPHOHYDROLASE SAMHD1"/>
    <property type="match status" value="1"/>
</dbReference>
<dbReference type="Pfam" id="PF01966">
    <property type="entry name" value="HD"/>
    <property type="match status" value="1"/>
</dbReference>
<dbReference type="Pfam" id="PF07647">
    <property type="entry name" value="SAM_2"/>
    <property type="match status" value="1"/>
</dbReference>
<dbReference type="SMART" id="SM00471">
    <property type="entry name" value="HDc"/>
    <property type="match status" value="1"/>
</dbReference>
<dbReference type="SMART" id="SM00454">
    <property type="entry name" value="SAM"/>
    <property type="match status" value="1"/>
</dbReference>
<dbReference type="SUPFAM" id="SSF109604">
    <property type="entry name" value="HD-domain/PDEase-like"/>
    <property type="match status" value="1"/>
</dbReference>
<dbReference type="SUPFAM" id="SSF47769">
    <property type="entry name" value="SAM/Pointed domain"/>
    <property type="match status" value="1"/>
</dbReference>
<dbReference type="PROSITE" id="PS51831">
    <property type="entry name" value="HD"/>
    <property type="match status" value="1"/>
</dbReference>
<dbReference type="PROSITE" id="PS50105">
    <property type="entry name" value="SAM_DOMAIN"/>
    <property type="match status" value="1"/>
</dbReference>
<evidence type="ECO:0000250" key="1">
    <source>
        <dbReference type="UniProtKB" id="Q6INN8"/>
    </source>
</evidence>
<evidence type="ECO:0000250" key="2">
    <source>
        <dbReference type="UniProtKB" id="Q9Y3Z3"/>
    </source>
</evidence>
<evidence type="ECO:0000255" key="3">
    <source>
        <dbReference type="PROSITE-ProRule" id="PRU00184"/>
    </source>
</evidence>
<evidence type="ECO:0000255" key="4">
    <source>
        <dbReference type="PROSITE-ProRule" id="PRU01175"/>
    </source>
</evidence>
<evidence type="ECO:0000256" key="5">
    <source>
        <dbReference type="SAM" id="MobiDB-lite"/>
    </source>
</evidence>
<evidence type="ECO:0000305" key="6"/>
<feature type="chain" id="PRO_0000361970" description="Deoxynucleoside triphosphate triphosphohydrolase SAMHD1">
    <location>
        <begin position="1"/>
        <end position="622"/>
    </location>
</feature>
<feature type="domain" description="SAM" evidence="3">
    <location>
        <begin position="26"/>
        <end position="89"/>
    </location>
</feature>
<feature type="domain" description="HD" evidence="4">
    <location>
        <begin position="143"/>
        <end position="296"/>
    </location>
</feature>
<feature type="region of interest" description="Disordered" evidence="5">
    <location>
        <begin position="571"/>
        <end position="622"/>
    </location>
</feature>
<feature type="compositionally biased region" description="Polar residues" evidence="5">
    <location>
        <begin position="594"/>
        <end position="606"/>
    </location>
</feature>
<feature type="active site" evidence="2">
    <location>
        <position position="212"/>
    </location>
</feature>
<feature type="binding site" description="in chain B" evidence="2">
    <location>
        <position position="95"/>
    </location>
    <ligand>
        <name>GTP</name>
        <dbReference type="ChEBI" id="CHEBI:37565"/>
        <note>allosteric activator; ligand shared between 3 neighboring subunits of the tetramer</note>
    </ligand>
</feature>
<feature type="binding site" description="in chain B" evidence="2">
    <location>
        <position position="96"/>
    </location>
    <ligand>
        <name>GTP</name>
        <dbReference type="ChEBI" id="CHEBI:37565"/>
        <note>allosteric activator; ligand shared between 3 neighboring subunits of the tetramer</note>
    </ligand>
</feature>
<feature type="binding site" description="in chain B" evidence="2">
    <location>
        <position position="98"/>
    </location>
    <ligand>
        <name>dGTP</name>
        <dbReference type="ChEBI" id="CHEBI:61429"/>
        <label>2</label>
        <note>allosteric activator; ligand shared between 3 neighboring subunits of the tetramer</note>
    </ligand>
</feature>
<feature type="binding site" description="in chain B" evidence="2">
    <location>
        <position position="116"/>
    </location>
    <ligand>
        <name>GTP</name>
        <dbReference type="ChEBI" id="CHEBI:37565"/>
        <note>allosteric activator; ligand shared between 3 neighboring subunits of the tetramer</note>
    </ligand>
</feature>
<feature type="binding site" description="in chain B" evidence="2">
    <location>
        <position position="121"/>
    </location>
    <ligand>
        <name>GTP</name>
        <dbReference type="ChEBI" id="CHEBI:37565"/>
        <note>allosteric activator; ligand shared between 3 neighboring subunits of the tetramer</note>
    </ligand>
</feature>
<feature type="binding site" description="in chain B" evidence="2">
    <location>
        <position position="124"/>
    </location>
    <ligand>
        <name>GTP</name>
        <dbReference type="ChEBI" id="CHEBI:37565"/>
        <note>allosteric activator; ligand shared between 3 neighboring subunits of the tetramer</note>
    </ligand>
</feature>
<feature type="binding site" evidence="2">
    <location>
        <position position="128"/>
    </location>
    <ligand>
        <name>dATP</name>
        <dbReference type="ChEBI" id="CHEBI:61404"/>
        <label>1</label>
        <note>substrate</note>
    </ligand>
</feature>
<feature type="binding site" evidence="2">
    <location>
        <position position="128"/>
    </location>
    <ligand>
        <name>dCTP</name>
        <dbReference type="ChEBI" id="CHEBI:61481"/>
        <label>1</label>
        <note>substrate</note>
    </ligand>
</feature>
<feature type="binding site" evidence="2">
    <location>
        <position position="128"/>
    </location>
    <ligand>
        <name>dGTP</name>
        <dbReference type="ChEBI" id="CHEBI:61429"/>
        <label>1</label>
        <note>substrate</note>
    </ligand>
</feature>
<feature type="binding site" evidence="2">
    <location>
        <position position="128"/>
    </location>
    <ligand>
        <name>dTTP</name>
        <dbReference type="ChEBI" id="CHEBI:37568"/>
        <label>1</label>
        <note>substrate</note>
    </ligand>
</feature>
<feature type="binding site" evidence="2">
    <location>
        <position position="129"/>
    </location>
    <ligand>
        <name>dGTP</name>
        <dbReference type="ChEBI" id="CHEBI:61429"/>
        <label>1</label>
        <note>substrate</note>
    </ligand>
</feature>
<feature type="binding site" description="in chain C" evidence="2">
    <location>
        <position position="135"/>
    </location>
    <ligand>
        <name>dGTP</name>
        <dbReference type="ChEBI" id="CHEBI:61429"/>
        <label>2</label>
        <note>allosteric activator; ligand shared between 3 neighboring subunits of the tetramer</note>
    </ligand>
</feature>
<feature type="binding site" evidence="2">
    <location>
        <position position="143"/>
    </location>
    <ligand>
        <name>dATP</name>
        <dbReference type="ChEBI" id="CHEBI:61404"/>
        <label>1</label>
        <note>substrate</note>
    </ligand>
</feature>
<feature type="binding site" evidence="2">
    <location>
        <position position="143"/>
    </location>
    <ligand>
        <name>dCTP</name>
        <dbReference type="ChEBI" id="CHEBI:61481"/>
        <label>1</label>
        <note>substrate</note>
    </ligand>
</feature>
<feature type="binding site" evidence="2">
    <location>
        <position position="143"/>
    </location>
    <ligand>
        <name>dGTP</name>
        <dbReference type="ChEBI" id="CHEBI:61429"/>
        <label>1</label>
        <note>substrate</note>
    </ligand>
</feature>
<feature type="binding site" evidence="2">
    <location>
        <position position="143"/>
    </location>
    <ligand>
        <name>dTTP</name>
        <dbReference type="ChEBI" id="CHEBI:37568"/>
        <label>1</label>
        <note>substrate</note>
    </ligand>
</feature>
<feature type="binding site" evidence="2">
    <location>
        <position position="146"/>
    </location>
    <ligand>
        <name>Mn(2+)</name>
        <dbReference type="ChEBI" id="CHEBI:29035"/>
    </ligand>
</feature>
<feature type="binding site" evidence="2">
    <location>
        <position position="185"/>
    </location>
    <ligand>
        <name>Mn(2+)</name>
        <dbReference type="ChEBI" id="CHEBI:29035"/>
    </ligand>
</feature>
<feature type="binding site" evidence="2">
    <location>
        <position position="186"/>
    </location>
    <ligand>
        <name>Mn(2+)</name>
        <dbReference type="ChEBI" id="CHEBI:29035"/>
    </ligand>
</feature>
<feature type="binding site" evidence="2">
    <location>
        <position position="189"/>
    </location>
    <ligand>
        <name>dATP</name>
        <dbReference type="ChEBI" id="CHEBI:61404"/>
        <label>1</label>
        <note>substrate</note>
    </ligand>
</feature>
<feature type="binding site" evidence="2">
    <location>
        <position position="189"/>
    </location>
    <ligand>
        <name>dCTP</name>
        <dbReference type="ChEBI" id="CHEBI:61481"/>
        <label>1</label>
        <note>substrate</note>
    </ligand>
</feature>
<feature type="binding site" evidence="2">
    <location>
        <position position="189"/>
    </location>
    <ligand>
        <name>dTTP</name>
        <dbReference type="ChEBI" id="CHEBI:37568"/>
        <label>1</label>
        <note>substrate</note>
    </ligand>
</feature>
<feature type="binding site" evidence="2">
    <location>
        <position position="194"/>
    </location>
    <ligand>
        <name>dATP</name>
        <dbReference type="ChEBI" id="CHEBI:61404"/>
        <label>1</label>
        <note>substrate</note>
    </ligand>
</feature>
<feature type="binding site" evidence="2">
    <location>
        <position position="194"/>
    </location>
    <ligand>
        <name>dCTP</name>
        <dbReference type="ChEBI" id="CHEBI:61481"/>
        <label>1</label>
        <note>substrate</note>
    </ligand>
</feature>
<feature type="binding site" evidence="2">
    <location>
        <position position="194"/>
    </location>
    <ligand>
        <name>dTTP</name>
        <dbReference type="ChEBI" id="CHEBI:37568"/>
        <label>1</label>
        <note>substrate</note>
    </ligand>
</feature>
<feature type="binding site" evidence="2">
    <location>
        <position position="291"/>
    </location>
    <ligand>
        <name>Mn(2+)</name>
        <dbReference type="ChEBI" id="CHEBI:29035"/>
    </ligand>
</feature>
<feature type="binding site" evidence="2">
    <location>
        <position position="292"/>
    </location>
    <ligand>
        <name>dATP</name>
        <dbReference type="ChEBI" id="CHEBI:61404"/>
        <label>1</label>
        <note>substrate</note>
    </ligand>
</feature>
<feature type="binding site" evidence="2">
    <location>
        <position position="292"/>
    </location>
    <ligand>
        <name>dCTP</name>
        <dbReference type="ChEBI" id="CHEBI:61481"/>
        <label>1</label>
        <note>substrate</note>
    </ligand>
</feature>
<feature type="binding site" evidence="2">
    <location>
        <position position="292"/>
    </location>
    <ligand>
        <name>dGTP</name>
        <dbReference type="ChEBI" id="CHEBI:61429"/>
        <label>1</label>
        <note>substrate</note>
    </ligand>
</feature>
<feature type="binding site" evidence="2">
    <location>
        <position position="292"/>
    </location>
    <ligand>
        <name>dTTP</name>
        <dbReference type="ChEBI" id="CHEBI:37568"/>
        <label>1</label>
        <note>substrate</note>
    </ligand>
</feature>
<feature type="binding site" evidence="2">
    <location>
        <position position="295"/>
    </location>
    <ligand>
        <name>dATP</name>
        <dbReference type="ChEBI" id="CHEBI:61404"/>
        <label>1</label>
        <note>substrate</note>
    </ligand>
</feature>
<feature type="binding site" evidence="2">
    <location>
        <position position="295"/>
    </location>
    <ligand>
        <name>dCTP</name>
        <dbReference type="ChEBI" id="CHEBI:61481"/>
        <label>1</label>
        <note>substrate</note>
    </ligand>
</feature>
<feature type="binding site" evidence="2">
    <location>
        <position position="295"/>
    </location>
    <ligand>
        <name>dGTP</name>
        <dbReference type="ChEBI" id="CHEBI:61429"/>
        <label>1</label>
        <note>substrate</note>
    </ligand>
</feature>
<feature type="binding site" evidence="2">
    <location>
        <position position="295"/>
    </location>
    <ligand>
        <name>dTTP</name>
        <dbReference type="ChEBI" id="CHEBI:37568"/>
        <label>1</label>
        <note>substrate</note>
    </ligand>
</feature>
<feature type="binding site" evidence="2">
    <location>
        <position position="299"/>
    </location>
    <ligand>
        <name>dATP</name>
        <dbReference type="ChEBI" id="CHEBI:61404"/>
        <label>1</label>
        <note>substrate</note>
    </ligand>
</feature>
<feature type="binding site" evidence="2">
    <location>
        <position position="299"/>
    </location>
    <ligand>
        <name>dCTP</name>
        <dbReference type="ChEBI" id="CHEBI:61481"/>
        <label>1</label>
        <note>substrate</note>
    </ligand>
</feature>
<feature type="binding site" evidence="2">
    <location>
        <position position="299"/>
    </location>
    <ligand>
        <name>dGTP</name>
        <dbReference type="ChEBI" id="CHEBI:61429"/>
        <label>1</label>
        <note>substrate</note>
    </ligand>
</feature>
<feature type="binding site" evidence="2">
    <location>
        <position position="299"/>
    </location>
    <ligand>
        <name>dTTP</name>
        <dbReference type="ChEBI" id="CHEBI:37568"/>
        <label>1</label>
        <note>substrate</note>
    </ligand>
</feature>
<feature type="binding site" description="in chain A" evidence="2">
    <location>
        <position position="313"/>
    </location>
    <ligand>
        <name>dGTP</name>
        <dbReference type="ChEBI" id="CHEBI:61429"/>
        <label>2</label>
        <note>allosteric activator; ligand shared between 3 neighboring subunits of the tetramer</note>
    </ligand>
</feature>
<feature type="binding site" description="in chain A" evidence="2">
    <location>
        <position position="332"/>
    </location>
    <ligand>
        <name>dGTP</name>
        <dbReference type="ChEBI" id="CHEBI:61429"/>
        <label>2</label>
        <note>allosteric activator; ligand shared between 3 neighboring subunits of the tetramer</note>
    </ligand>
</feature>
<feature type="binding site" description="in chain A" evidence="2">
    <location>
        <position position="334"/>
    </location>
    <ligand>
        <name>dGTP</name>
        <dbReference type="ChEBI" id="CHEBI:61429"/>
        <label>2</label>
        <note>allosteric activator; ligand shared between 3 neighboring subunits of the tetramer</note>
    </ligand>
</feature>
<feature type="binding site" description="in chain A" evidence="2">
    <location>
        <position position="338"/>
    </location>
    <ligand>
        <name>dGTP</name>
        <dbReference type="ChEBI" id="CHEBI:61429"/>
        <label>2</label>
        <note>allosteric activator; ligand shared between 3 neighboring subunits of the tetramer</note>
    </ligand>
</feature>
<feature type="binding site" evidence="2">
    <location>
        <position position="346"/>
    </location>
    <ligand>
        <name>dATP</name>
        <dbReference type="ChEBI" id="CHEBI:61404"/>
        <label>1</label>
        <note>substrate</note>
    </ligand>
</feature>
<feature type="binding site" evidence="2">
    <location>
        <position position="346"/>
    </location>
    <ligand>
        <name>dCTP</name>
        <dbReference type="ChEBI" id="CHEBI:61481"/>
        <label>1</label>
        <note>substrate</note>
    </ligand>
</feature>
<feature type="binding site" evidence="2">
    <location>
        <position position="346"/>
    </location>
    <ligand>
        <name>dGTP</name>
        <dbReference type="ChEBI" id="CHEBI:61429"/>
        <label>1</label>
        <note>substrate</note>
    </ligand>
</feature>
<feature type="binding site" evidence="2">
    <location>
        <position position="354"/>
    </location>
    <ligand>
        <name>dGTP</name>
        <dbReference type="ChEBI" id="CHEBI:61429"/>
        <label>1</label>
        <note>substrate</note>
    </ligand>
</feature>
<feature type="binding site" evidence="2">
    <location>
        <position position="355"/>
    </location>
    <ligand>
        <name>dATP</name>
        <dbReference type="ChEBI" id="CHEBI:61404"/>
        <label>1</label>
        <note>substrate</note>
    </ligand>
</feature>
<feature type="binding site" evidence="2">
    <location>
        <position position="355"/>
    </location>
    <ligand>
        <name>dCTP</name>
        <dbReference type="ChEBI" id="CHEBI:61481"/>
        <label>1</label>
        <note>substrate</note>
    </ligand>
</feature>
<feature type="binding site" evidence="2">
    <location>
        <position position="355"/>
    </location>
    <ligand>
        <name>dGTP</name>
        <dbReference type="ChEBI" id="CHEBI:61429"/>
        <label>1</label>
        <note>substrate</note>
    </ligand>
</feature>
<feature type="binding site" evidence="2">
    <location>
        <position position="355"/>
    </location>
    <ligand>
        <name>dTTP</name>
        <dbReference type="ChEBI" id="CHEBI:37568"/>
        <label>1</label>
        <note>substrate</note>
    </ligand>
</feature>
<feature type="binding site" description="in chain C" evidence="2">
    <location>
        <position position="356"/>
    </location>
    <ligand>
        <name>dGTP</name>
        <dbReference type="ChEBI" id="CHEBI:61429"/>
        <label>2</label>
        <note>allosteric activator; ligand shared between 3 neighboring subunits of the tetramer</note>
    </ligand>
</feature>
<feature type="binding site" description="in chain C" evidence="2">
    <location>
        <position position="357"/>
    </location>
    <ligand>
        <name>dGTP</name>
        <dbReference type="ChEBI" id="CHEBI:61429"/>
        <label>2</label>
        <note>allosteric activator; ligand shared between 3 neighboring subunits of the tetramer</note>
    </ligand>
</feature>
<feature type="binding site" description="in chain C" evidence="2">
    <location>
        <position position="431"/>
    </location>
    <ligand>
        <name>GTP</name>
        <dbReference type="ChEBI" id="CHEBI:37565"/>
        <note>allosteric activator; ligand shared between 3 neighboring subunits of the tetramer</note>
    </ligand>
</feature>
<feature type="binding site" description="in chain C" evidence="2">
    <location>
        <position position="435"/>
    </location>
    <ligand>
        <name>GTP</name>
        <dbReference type="ChEBI" id="CHEBI:37565"/>
        <note>allosteric activator; ligand shared between 3 neighboring subunits of the tetramer</note>
    </ligand>
</feature>
<feature type="binding site" description="in chain A" evidence="2">
    <location>
        <position position="502"/>
    </location>
    <ligand>
        <name>dGTP</name>
        <dbReference type="ChEBI" id="CHEBI:61429"/>
        <label>2</label>
        <note>allosteric activator; ligand shared between 3 neighboring subunits of the tetramer</note>
    </ligand>
</feature>
<feature type="binding site" description="in chain A" evidence="2">
    <location>
        <position position="502"/>
    </location>
    <ligand>
        <name>GTP</name>
        <dbReference type="ChEBI" id="CHEBI:37565"/>
        <note>allosteric activator; ligand shared between 3 neighboring subunits of the tetramer</note>
    </ligand>
</feature>
<reference key="1">
    <citation type="submission" date="2005-05" db="EMBL/GenBank/DDBJ databases">
        <authorList>
            <consortium name="NIH - Zebrafish Gene Collection (ZGC) project"/>
        </authorList>
    </citation>
    <scope>NUCLEOTIDE SEQUENCE [LARGE SCALE MRNA]</scope>
    <source>
        <tissue>Ovary</tissue>
    </source>
</reference>
<organism>
    <name type="scientific">Danio rerio</name>
    <name type="common">Zebrafish</name>
    <name type="synonym">Brachydanio rerio</name>
    <dbReference type="NCBI Taxonomy" id="7955"/>
    <lineage>
        <taxon>Eukaryota</taxon>
        <taxon>Metazoa</taxon>
        <taxon>Chordata</taxon>
        <taxon>Craniata</taxon>
        <taxon>Vertebrata</taxon>
        <taxon>Euteleostomi</taxon>
        <taxon>Actinopterygii</taxon>
        <taxon>Neopterygii</taxon>
        <taxon>Teleostei</taxon>
        <taxon>Ostariophysi</taxon>
        <taxon>Cypriniformes</taxon>
        <taxon>Danionidae</taxon>
        <taxon>Danioninae</taxon>
        <taxon>Danio</taxon>
    </lineage>
</organism>